<organism>
    <name type="scientific">Staphylococcus aureus (strain MSSA476)</name>
    <dbReference type="NCBI Taxonomy" id="282459"/>
    <lineage>
        <taxon>Bacteria</taxon>
        <taxon>Bacillati</taxon>
        <taxon>Bacillota</taxon>
        <taxon>Bacilli</taxon>
        <taxon>Bacillales</taxon>
        <taxon>Staphylococcaceae</taxon>
        <taxon>Staphylococcus</taxon>
    </lineage>
</organism>
<name>LEU3_STAAS</name>
<proteinExistence type="inferred from homology"/>
<feature type="chain" id="PRO_0000083753" description="3-isopropylmalate dehydrogenase">
    <location>
        <begin position="1"/>
        <end position="348"/>
    </location>
</feature>
<feature type="binding site" evidence="1">
    <location>
        <begin position="76"/>
        <end position="87"/>
    </location>
    <ligand>
        <name>NAD(+)</name>
        <dbReference type="ChEBI" id="CHEBI:57540"/>
    </ligand>
</feature>
<feature type="binding site" evidence="1">
    <location>
        <position position="94"/>
    </location>
    <ligand>
        <name>substrate</name>
    </ligand>
</feature>
<feature type="binding site" evidence="1">
    <location>
        <position position="104"/>
    </location>
    <ligand>
        <name>substrate</name>
    </ligand>
</feature>
<feature type="binding site" evidence="1">
    <location>
        <position position="132"/>
    </location>
    <ligand>
        <name>substrate</name>
    </ligand>
</feature>
<feature type="binding site" evidence="1">
    <location>
        <position position="217"/>
    </location>
    <ligand>
        <name>Mg(2+)</name>
        <dbReference type="ChEBI" id="CHEBI:18420"/>
    </ligand>
</feature>
<feature type="binding site" evidence="1">
    <location>
        <position position="217"/>
    </location>
    <ligand>
        <name>substrate</name>
    </ligand>
</feature>
<feature type="binding site" evidence="1">
    <location>
        <position position="241"/>
    </location>
    <ligand>
        <name>Mg(2+)</name>
        <dbReference type="ChEBI" id="CHEBI:18420"/>
    </ligand>
</feature>
<feature type="binding site" evidence="1">
    <location>
        <position position="245"/>
    </location>
    <ligand>
        <name>Mg(2+)</name>
        <dbReference type="ChEBI" id="CHEBI:18420"/>
    </ligand>
</feature>
<feature type="binding site" evidence="1">
    <location>
        <begin position="275"/>
        <end position="287"/>
    </location>
    <ligand>
        <name>NAD(+)</name>
        <dbReference type="ChEBI" id="CHEBI:57540"/>
    </ligand>
</feature>
<feature type="site" description="Important for catalysis" evidence="1">
    <location>
        <position position="139"/>
    </location>
</feature>
<feature type="site" description="Important for catalysis" evidence="1">
    <location>
        <position position="185"/>
    </location>
</feature>
<comment type="function">
    <text evidence="1">Catalyzes the oxidation of 3-carboxy-2-hydroxy-4-methylpentanoate (3-isopropylmalate) to 3-carboxy-4-methyl-2-oxopentanoate. The product decarboxylates to 4-methyl-2 oxopentanoate.</text>
</comment>
<comment type="catalytic activity">
    <reaction evidence="1">
        <text>(2R,3S)-3-isopropylmalate + NAD(+) = 4-methyl-2-oxopentanoate + CO2 + NADH</text>
        <dbReference type="Rhea" id="RHEA:32271"/>
        <dbReference type="ChEBI" id="CHEBI:16526"/>
        <dbReference type="ChEBI" id="CHEBI:17865"/>
        <dbReference type="ChEBI" id="CHEBI:35121"/>
        <dbReference type="ChEBI" id="CHEBI:57540"/>
        <dbReference type="ChEBI" id="CHEBI:57945"/>
        <dbReference type="EC" id="1.1.1.85"/>
    </reaction>
</comment>
<comment type="cofactor">
    <cofactor evidence="1">
        <name>Mg(2+)</name>
        <dbReference type="ChEBI" id="CHEBI:18420"/>
    </cofactor>
    <cofactor evidence="1">
        <name>Mn(2+)</name>
        <dbReference type="ChEBI" id="CHEBI:29035"/>
    </cofactor>
    <text evidence="1">Binds 1 Mg(2+) or Mn(2+) ion per subunit.</text>
</comment>
<comment type="pathway">
    <text evidence="1">Amino-acid biosynthesis; L-leucine biosynthesis; L-leucine from 3-methyl-2-oxobutanoate: step 3/4.</text>
</comment>
<comment type="subunit">
    <text evidence="1">Homodimer.</text>
</comment>
<comment type="subcellular location">
    <subcellularLocation>
        <location evidence="1">Cytoplasm</location>
    </subcellularLocation>
</comment>
<comment type="similarity">
    <text evidence="1">Belongs to the isocitrate and isopropylmalate dehydrogenases family. LeuB type 1 subfamily.</text>
</comment>
<gene>
    <name evidence="1" type="primary">leuB</name>
    <name type="ordered locus">SAS1963</name>
</gene>
<evidence type="ECO:0000255" key="1">
    <source>
        <dbReference type="HAMAP-Rule" id="MF_01033"/>
    </source>
</evidence>
<dbReference type="EC" id="1.1.1.85" evidence="1"/>
<dbReference type="EMBL" id="BX571857">
    <property type="protein sequence ID" value="CAG43770.1"/>
    <property type="molecule type" value="Genomic_DNA"/>
</dbReference>
<dbReference type="RefSeq" id="WP_000221945.1">
    <property type="nucleotide sequence ID" value="NC_002953.3"/>
</dbReference>
<dbReference type="SMR" id="Q6G7Q0"/>
<dbReference type="KEGG" id="sas:SAS1963"/>
<dbReference type="HOGENOM" id="CLU_031953_0_3_9"/>
<dbReference type="UniPathway" id="UPA00048">
    <property type="reaction ID" value="UER00072"/>
</dbReference>
<dbReference type="GO" id="GO:0005829">
    <property type="term" value="C:cytosol"/>
    <property type="evidence" value="ECO:0007669"/>
    <property type="project" value="TreeGrafter"/>
</dbReference>
<dbReference type="GO" id="GO:0003862">
    <property type="term" value="F:3-isopropylmalate dehydrogenase activity"/>
    <property type="evidence" value="ECO:0007669"/>
    <property type="project" value="UniProtKB-UniRule"/>
</dbReference>
<dbReference type="GO" id="GO:0000287">
    <property type="term" value="F:magnesium ion binding"/>
    <property type="evidence" value="ECO:0007669"/>
    <property type="project" value="InterPro"/>
</dbReference>
<dbReference type="GO" id="GO:0051287">
    <property type="term" value="F:NAD binding"/>
    <property type="evidence" value="ECO:0007669"/>
    <property type="project" value="InterPro"/>
</dbReference>
<dbReference type="GO" id="GO:0009098">
    <property type="term" value="P:L-leucine biosynthetic process"/>
    <property type="evidence" value="ECO:0007669"/>
    <property type="project" value="UniProtKB-UniRule"/>
</dbReference>
<dbReference type="FunFam" id="3.40.718.10:FF:000006">
    <property type="entry name" value="3-isopropylmalate dehydrogenase"/>
    <property type="match status" value="1"/>
</dbReference>
<dbReference type="Gene3D" id="3.40.718.10">
    <property type="entry name" value="Isopropylmalate Dehydrogenase"/>
    <property type="match status" value="1"/>
</dbReference>
<dbReference type="HAMAP" id="MF_01033">
    <property type="entry name" value="LeuB_type1"/>
    <property type="match status" value="1"/>
</dbReference>
<dbReference type="InterPro" id="IPR019818">
    <property type="entry name" value="IsoCit/isopropylmalate_DH_CS"/>
</dbReference>
<dbReference type="InterPro" id="IPR024084">
    <property type="entry name" value="IsoPropMal-DH-like_dom"/>
</dbReference>
<dbReference type="InterPro" id="IPR004429">
    <property type="entry name" value="Isopropylmalate_DH"/>
</dbReference>
<dbReference type="NCBIfam" id="TIGR00169">
    <property type="entry name" value="leuB"/>
    <property type="match status" value="1"/>
</dbReference>
<dbReference type="PANTHER" id="PTHR42979">
    <property type="entry name" value="3-ISOPROPYLMALATE DEHYDROGENASE"/>
    <property type="match status" value="1"/>
</dbReference>
<dbReference type="PANTHER" id="PTHR42979:SF1">
    <property type="entry name" value="3-ISOPROPYLMALATE DEHYDROGENASE"/>
    <property type="match status" value="1"/>
</dbReference>
<dbReference type="Pfam" id="PF00180">
    <property type="entry name" value="Iso_dh"/>
    <property type="match status" value="1"/>
</dbReference>
<dbReference type="SMART" id="SM01329">
    <property type="entry name" value="Iso_dh"/>
    <property type="match status" value="1"/>
</dbReference>
<dbReference type="SUPFAM" id="SSF53659">
    <property type="entry name" value="Isocitrate/Isopropylmalate dehydrogenase-like"/>
    <property type="match status" value="1"/>
</dbReference>
<dbReference type="PROSITE" id="PS00470">
    <property type="entry name" value="IDH_IMDH"/>
    <property type="match status" value="1"/>
</dbReference>
<keyword id="KW-0028">Amino-acid biosynthesis</keyword>
<keyword id="KW-0100">Branched-chain amino acid biosynthesis</keyword>
<keyword id="KW-0963">Cytoplasm</keyword>
<keyword id="KW-0432">Leucine biosynthesis</keyword>
<keyword id="KW-0460">Magnesium</keyword>
<keyword id="KW-0464">Manganese</keyword>
<keyword id="KW-0479">Metal-binding</keyword>
<keyword id="KW-0520">NAD</keyword>
<keyword id="KW-0560">Oxidoreductase</keyword>
<sequence>MTYNIVALPGDGIGPEILNGSLSLLEIISNKYNFNYQIEHHEFGGASIDTFGEPLTEKTLNACKRADAILLGAIGGPKWTDPNNRPEQGLLKLRKSLNLFANIRPTTVVKGASSLSPLKEERVEGTDLVIVRELTSGIYFGEPRHFNNHEALDSLTYTREEIERIVHVAFKLAASRRGKLTSVDKENVLASSKLWRKVVNEVSQLYPEVTVNHLLVDACSMHLITNPKQFDVIVCENLFGDILSDEASVIPGSLGLSPSASFSNDGPRLYEPIHGSAPDIAGKNVANPFGMILSLAMCLRESLNQPDAADELEQHIYNMIEHGQTTADLGGKLNTTDIFEILSQKLNH</sequence>
<accession>Q6G7Q0</accession>
<protein>
    <recommendedName>
        <fullName evidence="1">3-isopropylmalate dehydrogenase</fullName>
        <ecNumber evidence="1">1.1.1.85</ecNumber>
    </recommendedName>
    <alternativeName>
        <fullName evidence="1">3-IPM-DH</fullName>
    </alternativeName>
    <alternativeName>
        <fullName evidence="1">Beta-IPM dehydrogenase</fullName>
        <shortName evidence="1">IMDH</shortName>
    </alternativeName>
</protein>
<reference key="1">
    <citation type="journal article" date="2004" name="Proc. Natl. Acad. Sci. U.S.A.">
        <title>Complete genomes of two clinical Staphylococcus aureus strains: evidence for the rapid evolution of virulence and drug resistance.</title>
        <authorList>
            <person name="Holden M.T.G."/>
            <person name="Feil E.J."/>
            <person name="Lindsay J.A."/>
            <person name="Peacock S.J."/>
            <person name="Day N.P.J."/>
            <person name="Enright M.C."/>
            <person name="Foster T.J."/>
            <person name="Moore C.E."/>
            <person name="Hurst L."/>
            <person name="Atkin R."/>
            <person name="Barron A."/>
            <person name="Bason N."/>
            <person name="Bentley S.D."/>
            <person name="Chillingworth C."/>
            <person name="Chillingworth T."/>
            <person name="Churcher C."/>
            <person name="Clark L."/>
            <person name="Corton C."/>
            <person name="Cronin A."/>
            <person name="Doggett J."/>
            <person name="Dowd L."/>
            <person name="Feltwell T."/>
            <person name="Hance Z."/>
            <person name="Harris B."/>
            <person name="Hauser H."/>
            <person name="Holroyd S."/>
            <person name="Jagels K."/>
            <person name="James K.D."/>
            <person name="Lennard N."/>
            <person name="Line A."/>
            <person name="Mayes R."/>
            <person name="Moule S."/>
            <person name="Mungall K."/>
            <person name="Ormond D."/>
            <person name="Quail M.A."/>
            <person name="Rabbinowitsch E."/>
            <person name="Rutherford K.M."/>
            <person name="Sanders M."/>
            <person name="Sharp S."/>
            <person name="Simmonds M."/>
            <person name="Stevens K."/>
            <person name="Whitehead S."/>
            <person name="Barrell B.G."/>
            <person name="Spratt B.G."/>
            <person name="Parkhill J."/>
        </authorList>
    </citation>
    <scope>NUCLEOTIDE SEQUENCE [LARGE SCALE GENOMIC DNA]</scope>
    <source>
        <strain>MSSA476</strain>
    </source>
</reference>